<name>IL8_SHEEP</name>
<reference key="1">
    <citation type="journal article" date="1994" name="Gene">
        <title>Sequencing of the ovine interleukin-8-encoding cDNA using the polymerase chain reaction.</title>
        <authorList>
            <person name="Legastelois I."/>
            <person name="Greenland T."/>
            <person name="Arnaud P."/>
            <person name="Mornex J.F."/>
            <person name="Cordier G."/>
        </authorList>
    </citation>
    <scope>NUCLEOTIDE SEQUENCE [MRNA]</scope>
</reference>
<reference key="2">
    <citation type="journal article" date="1994" name="Immunol. Cell Biol.">
        <title>Cloning, sequencing, expression and inflammatory activity in skin of ovine interleukin-8.</title>
        <authorList>
            <person name="Seow H.F."/>
            <person name="Yoshimura T."/>
            <person name="Wood P.R."/>
            <person name="Colditz I.G."/>
        </authorList>
    </citation>
    <scope>NUCLEOTIDE SEQUENCE [MRNA]</scope>
</reference>
<evidence type="ECO:0000250" key="1"/>
<evidence type="ECO:0000250" key="2">
    <source>
        <dbReference type="UniProtKB" id="P10145"/>
    </source>
</evidence>
<evidence type="ECO:0000305" key="3"/>
<organism>
    <name type="scientific">Ovis aries</name>
    <name type="common">Sheep</name>
    <dbReference type="NCBI Taxonomy" id="9940"/>
    <lineage>
        <taxon>Eukaryota</taxon>
        <taxon>Metazoa</taxon>
        <taxon>Chordata</taxon>
        <taxon>Craniata</taxon>
        <taxon>Vertebrata</taxon>
        <taxon>Euteleostomi</taxon>
        <taxon>Mammalia</taxon>
        <taxon>Eutheria</taxon>
        <taxon>Laurasiatheria</taxon>
        <taxon>Artiodactyla</taxon>
        <taxon>Ruminantia</taxon>
        <taxon>Pecora</taxon>
        <taxon>Bovidae</taxon>
        <taxon>Caprinae</taxon>
        <taxon>Ovis</taxon>
    </lineage>
</organism>
<comment type="function">
    <text evidence="2">Chemotactic factor that mediates inflammatory response by attracting neutrophils, basophils, and T-cells to clear pathogens and protect the host from infection. Also plays an important role in neutrophil activation. Released in response to an inflammatory stimulus, exerts its effect by binding to the G-protein-coupled receptors CXCR1 and CXCR2, primarily found in neutrophils, monocytes and endothelial cells. G-protein heterotrimer (alpha, beta, gamma subunits) constitutively binds to CXCR1/CXCR2 receptor and activation by IL8 leads to beta and gamma subunits release from Galpha (GNAI2 in neutrophils) and activation of several downstream signaling pathways including PI3K and MAPK pathways.</text>
</comment>
<comment type="subunit">
    <text evidence="2">Homodimer. Interacts with TNFAIP6 (via Link domain); this interaction interferes with chemokine binding to glycosaminoglycans.</text>
</comment>
<comment type="subcellular location">
    <subcellularLocation>
        <location>Secreted</location>
    </subcellularLocation>
</comment>
<comment type="PTM">
    <text evidence="1">Citrullination at Arg-27 prevents proteolysis, and dampens tissue inflammation, it also enhances leukocytosis, possibly through impaired chemokine clearance from the blood circulation.</text>
</comment>
<comment type="similarity">
    <text evidence="3">Belongs to the intercrine alpha (chemokine CxC) family.</text>
</comment>
<gene>
    <name type="primary">CXCL8</name>
    <name type="synonym">IL8</name>
</gene>
<sequence length="101" mass="11292">MTSKLAVALLAAFLLSAALCEAAVLSRMSTELRCQCIKTHSTPFHPKFIKELRVIESGPHCENSEIIVKLTNGKEVCLDPKEKWVQKVVQAFLKRAEKQDP</sequence>
<protein>
    <recommendedName>
        <fullName>Interleukin-8</fullName>
        <shortName>IL-8</shortName>
    </recommendedName>
    <alternativeName>
        <fullName>C-X-C motif chemokine 8</fullName>
    </alternativeName>
    <alternativeName>
        <fullName>Chemokine (C-X-C motif) ligand 8</fullName>
    </alternativeName>
</protein>
<feature type="signal peptide" evidence="1">
    <location>
        <begin position="1"/>
        <end position="22"/>
    </location>
</feature>
<feature type="chain" id="PRO_0000005136" description="Interleukin-8">
    <location>
        <begin position="23"/>
        <end position="101"/>
    </location>
</feature>
<feature type="modified residue" description="Citrulline" evidence="1">
    <location>
        <position position="27"/>
    </location>
</feature>
<feature type="disulfide bond" evidence="1">
    <location>
        <begin position="34"/>
        <end position="61"/>
    </location>
</feature>
<feature type="disulfide bond" evidence="1">
    <location>
        <begin position="36"/>
        <end position="77"/>
    </location>
</feature>
<dbReference type="EMBL" id="X78306">
    <property type="protein sequence ID" value="CAA55115.1"/>
    <property type="molecule type" value="mRNA"/>
</dbReference>
<dbReference type="EMBL" id="S74436">
    <property type="protein sequence ID" value="AAB33241.1"/>
    <property type="molecule type" value="mRNA"/>
</dbReference>
<dbReference type="PIR" id="S42496">
    <property type="entry name" value="S42496"/>
</dbReference>
<dbReference type="RefSeq" id="NP_001009401.1">
    <property type="nucleotide sequence ID" value="NM_001009401.2"/>
</dbReference>
<dbReference type="SMR" id="P36925"/>
<dbReference type="STRING" id="9940.ENSOARP00000015557"/>
<dbReference type="PaxDb" id="9940-ENSOARP00000015557"/>
<dbReference type="Ensembl" id="ENSOART00180061413">
    <property type="protein sequence ID" value="ENSOARP00180032948"/>
    <property type="gene ID" value="ENSOARG00180036467"/>
</dbReference>
<dbReference type="Ensembl" id="ENSOART00215061916">
    <property type="protein sequence ID" value="ENSOARP00215032821"/>
    <property type="gene ID" value="ENSOARG00215036840"/>
</dbReference>
<dbReference type="Ensembl" id="ENSOART00220043369">
    <property type="protein sequence ID" value="ENSOARP00220023392"/>
    <property type="gene ID" value="ENSOARG00220025980"/>
</dbReference>
<dbReference type="Ensembl" id="ENSOART00225068124">
    <property type="protein sequence ID" value="ENSOARP00225034783"/>
    <property type="gene ID" value="ENSOARG00225041060"/>
</dbReference>
<dbReference type="Ensembl" id="ENSOART00260013577">
    <property type="protein sequence ID" value="ENSOARP00260006848"/>
    <property type="gene ID" value="ENSOARG00260008381"/>
</dbReference>
<dbReference type="GeneID" id="443418"/>
<dbReference type="KEGG" id="oas:443418"/>
<dbReference type="CTD" id="3576"/>
<dbReference type="eggNOG" id="ENOG502S7MM">
    <property type="taxonomic scope" value="Eukaryota"/>
</dbReference>
<dbReference type="HOGENOM" id="CLU_143902_3_0_1"/>
<dbReference type="OMA" id="IGTELRC"/>
<dbReference type="OrthoDB" id="9937393at2759"/>
<dbReference type="Proteomes" id="UP000002356">
    <property type="component" value="Chromosome 6"/>
</dbReference>
<dbReference type="Bgee" id="ENSOARG00000014496">
    <property type="expression patterns" value="Expressed in caecum and 49 other cell types or tissues"/>
</dbReference>
<dbReference type="ExpressionAtlas" id="P36925">
    <property type="expression patterns" value="baseline"/>
</dbReference>
<dbReference type="GO" id="GO:0005615">
    <property type="term" value="C:extracellular space"/>
    <property type="evidence" value="ECO:0007669"/>
    <property type="project" value="UniProtKB-KW"/>
</dbReference>
<dbReference type="GO" id="GO:0008009">
    <property type="term" value="F:chemokine activity"/>
    <property type="evidence" value="ECO:0007669"/>
    <property type="project" value="Ensembl"/>
</dbReference>
<dbReference type="GO" id="GO:0008201">
    <property type="term" value="F:heparin binding"/>
    <property type="evidence" value="ECO:0000250"/>
    <property type="project" value="UniProtKB"/>
</dbReference>
<dbReference type="GO" id="GO:0005153">
    <property type="term" value="F:interleukin-8 receptor binding"/>
    <property type="evidence" value="ECO:0000250"/>
    <property type="project" value="UniProtKB"/>
</dbReference>
<dbReference type="GO" id="GO:0044344">
    <property type="term" value="P:cellular response to fibroblast growth factor stimulus"/>
    <property type="evidence" value="ECO:0007669"/>
    <property type="project" value="Ensembl"/>
</dbReference>
<dbReference type="GO" id="GO:0071347">
    <property type="term" value="P:cellular response to interleukin-1"/>
    <property type="evidence" value="ECO:0007669"/>
    <property type="project" value="Ensembl"/>
</dbReference>
<dbReference type="GO" id="GO:0071222">
    <property type="term" value="P:cellular response to lipopolysaccharide"/>
    <property type="evidence" value="ECO:0007669"/>
    <property type="project" value="Ensembl"/>
</dbReference>
<dbReference type="GO" id="GO:0071356">
    <property type="term" value="P:cellular response to tumor necrosis factor"/>
    <property type="evidence" value="ECO:0007669"/>
    <property type="project" value="Ensembl"/>
</dbReference>
<dbReference type="GO" id="GO:0048566">
    <property type="term" value="P:embryonic digestive tract development"/>
    <property type="evidence" value="ECO:0007669"/>
    <property type="project" value="Ensembl"/>
</dbReference>
<dbReference type="GO" id="GO:0006955">
    <property type="term" value="P:immune response"/>
    <property type="evidence" value="ECO:0007669"/>
    <property type="project" value="InterPro"/>
</dbReference>
<dbReference type="GO" id="GO:0050930">
    <property type="term" value="P:induction of positive chemotaxis"/>
    <property type="evidence" value="ECO:0000250"/>
    <property type="project" value="UniProtKB"/>
</dbReference>
<dbReference type="GO" id="GO:0006954">
    <property type="term" value="P:inflammatory response"/>
    <property type="evidence" value="ECO:0007669"/>
    <property type="project" value="UniProtKB-KW"/>
</dbReference>
<dbReference type="GO" id="GO:0035556">
    <property type="term" value="P:intracellular signal transduction"/>
    <property type="evidence" value="ECO:0007669"/>
    <property type="project" value="Ensembl"/>
</dbReference>
<dbReference type="GO" id="GO:0060354">
    <property type="term" value="P:negative regulation of cell adhesion molecule production"/>
    <property type="evidence" value="ECO:0007669"/>
    <property type="project" value="Ensembl"/>
</dbReference>
<dbReference type="GO" id="GO:0045744">
    <property type="term" value="P:negative regulation of G protein-coupled receptor signaling pathway"/>
    <property type="evidence" value="ECO:0007669"/>
    <property type="project" value="Ensembl"/>
</dbReference>
<dbReference type="GO" id="GO:0010629">
    <property type="term" value="P:negative regulation of gene expression"/>
    <property type="evidence" value="ECO:0007669"/>
    <property type="project" value="Ensembl"/>
</dbReference>
<dbReference type="GO" id="GO:0042119">
    <property type="term" value="P:neutrophil activation"/>
    <property type="evidence" value="ECO:0007669"/>
    <property type="project" value="Ensembl"/>
</dbReference>
<dbReference type="GO" id="GO:0030593">
    <property type="term" value="P:neutrophil chemotaxis"/>
    <property type="evidence" value="ECO:0000250"/>
    <property type="project" value="UniProtKB"/>
</dbReference>
<dbReference type="GO" id="GO:0045766">
    <property type="term" value="P:positive regulation of angiogenesis"/>
    <property type="evidence" value="ECO:0007669"/>
    <property type="project" value="Ensembl"/>
</dbReference>
<dbReference type="GO" id="GO:0010628">
    <property type="term" value="P:positive regulation of gene expression"/>
    <property type="evidence" value="ECO:0007669"/>
    <property type="project" value="Ensembl"/>
</dbReference>
<dbReference type="GO" id="GO:0031623">
    <property type="term" value="P:receptor internalization"/>
    <property type="evidence" value="ECO:0007669"/>
    <property type="project" value="Ensembl"/>
</dbReference>
<dbReference type="GO" id="GO:0030155">
    <property type="term" value="P:regulation of cell adhesion"/>
    <property type="evidence" value="ECO:0000250"/>
    <property type="project" value="UniProtKB"/>
</dbReference>
<dbReference type="GO" id="GO:2000535">
    <property type="term" value="P:regulation of entry of bacterium into host cell"/>
    <property type="evidence" value="ECO:0007669"/>
    <property type="project" value="Ensembl"/>
</dbReference>
<dbReference type="GO" id="GO:0045091">
    <property type="term" value="P:regulation of single stranded viral RNA replication via double stranded DNA intermediate"/>
    <property type="evidence" value="ECO:0000250"/>
    <property type="project" value="UniProtKB"/>
</dbReference>
<dbReference type="GO" id="GO:0034976">
    <property type="term" value="P:response to endoplasmic reticulum stress"/>
    <property type="evidence" value="ECO:0007669"/>
    <property type="project" value="Ensembl"/>
</dbReference>
<dbReference type="CDD" id="cd00273">
    <property type="entry name" value="Chemokine_CXC"/>
    <property type="match status" value="1"/>
</dbReference>
<dbReference type="FunFam" id="2.40.50.40:FF:000004">
    <property type="entry name" value="C-X-C motif chemokine"/>
    <property type="match status" value="1"/>
</dbReference>
<dbReference type="Gene3D" id="2.40.50.40">
    <property type="match status" value="1"/>
</dbReference>
<dbReference type="InterPro" id="IPR039809">
    <property type="entry name" value="Chemokine_b/g/d"/>
</dbReference>
<dbReference type="InterPro" id="IPR001089">
    <property type="entry name" value="Chemokine_CXC"/>
</dbReference>
<dbReference type="InterPro" id="IPR018048">
    <property type="entry name" value="Chemokine_CXC_CS"/>
</dbReference>
<dbReference type="InterPro" id="IPR001811">
    <property type="entry name" value="Chemokine_IL8-like_dom"/>
</dbReference>
<dbReference type="InterPro" id="IPR033899">
    <property type="entry name" value="CXC_Chemokine_domain"/>
</dbReference>
<dbReference type="InterPro" id="IPR036048">
    <property type="entry name" value="Interleukin_8-like_sf"/>
</dbReference>
<dbReference type="PANTHER" id="PTHR12015:SF200">
    <property type="entry name" value="INTERLEUKIN-8"/>
    <property type="match status" value="1"/>
</dbReference>
<dbReference type="PANTHER" id="PTHR12015">
    <property type="entry name" value="SMALL INDUCIBLE CYTOKINE A"/>
    <property type="match status" value="1"/>
</dbReference>
<dbReference type="Pfam" id="PF00048">
    <property type="entry name" value="IL8"/>
    <property type="match status" value="1"/>
</dbReference>
<dbReference type="PRINTS" id="PR00436">
    <property type="entry name" value="INTERLEUKIN8"/>
</dbReference>
<dbReference type="PRINTS" id="PR00437">
    <property type="entry name" value="SMALLCYTKCXC"/>
</dbReference>
<dbReference type="SMART" id="SM00199">
    <property type="entry name" value="SCY"/>
    <property type="match status" value="1"/>
</dbReference>
<dbReference type="SUPFAM" id="SSF54117">
    <property type="entry name" value="Interleukin 8-like chemokines"/>
    <property type="match status" value="1"/>
</dbReference>
<dbReference type="PROSITE" id="PS00471">
    <property type="entry name" value="SMALL_CYTOKINES_CXC"/>
    <property type="match status" value="1"/>
</dbReference>
<accession>P36925</accession>
<proteinExistence type="inferred from homology"/>
<keyword id="KW-0145">Chemotaxis</keyword>
<keyword id="KW-0164">Citrullination</keyword>
<keyword id="KW-0202">Cytokine</keyword>
<keyword id="KW-1015">Disulfide bond</keyword>
<keyword id="KW-0395">Inflammatory response</keyword>
<keyword id="KW-1185">Reference proteome</keyword>
<keyword id="KW-0964">Secreted</keyword>
<keyword id="KW-0732">Signal</keyword>